<reference key="1">
    <citation type="journal article" date="2006" name="J. Bacteriol.">
        <title>Whole-genome sequence of Listeria welshimeri reveals common steps in genome reduction with Listeria innocua as compared to Listeria monocytogenes.</title>
        <authorList>
            <person name="Hain T."/>
            <person name="Steinweg C."/>
            <person name="Kuenne C.T."/>
            <person name="Billion A."/>
            <person name="Ghai R."/>
            <person name="Chatterjee S.S."/>
            <person name="Domann E."/>
            <person name="Kaerst U."/>
            <person name="Goesmann A."/>
            <person name="Bekel T."/>
            <person name="Bartels D."/>
            <person name="Kaiser O."/>
            <person name="Meyer F."/>
            <person name="Puehler A."/>
            <person name="Weisshaar B."/>
            <person name="Wehland J."/>
            <person name="Liang C."/>
            <person name="Dandekar T."/>
            <person name="Lampidis R."/>
            <person name="Kreft J."/>
            <person name="Goebel W."/>
            <person name="Chakraborty T."/>
        </authorList>
    </citation>
    <scope>NUCLEOTIDE SEQUENCE [LARGE SCALE GENOMIC DNA]</scope>
    <source>
        <strain>ATCC 35897 / DSM 20650 / CCUG 15529 / CIP 8149 / NCTC 11857 / SLCC 5334 / V8</strain>
    </source>
</reference>
<accession>A0AIS5</accession>
<feature type="chain" id="PRO_1000053602" description="Protein GrpE">
    <location>
        <begin position="1"/>
        <end position="191"/>
    </location>
</feature>
<name>GRPE_LISW6</name>
<gene>
    <name evidence="1" type="primary">grpE</name>
    <name type="ordered locus">lwe1489</name>
</gene>
<comment type="function">
    <text evidence="1">Participates actively in the response to hyperosmotic and heat shock by preventing the aggregation of stress-denatured proteins, in association with DnaK and GrpE. It is the nucleotide exchange factor for DnaK and may function as a thermosensor. Unfolded proteins bind initially to DnaJ; upon interaction with the DnaJ-bound protein, DnaK hydrolyzes its bound ATP, resulting in the formation of a stable complex. GrpE releases ADP from DnaK; ATP binding to DnaK triggers the release of the substrate protein, thus completing the reaction cycle. Several rounds of ATP-dependent interactions between DnaJ, DnaK and GrpE are required for fully efficient folding.</text>
</comment>
<comment type="subunit">
    <text evidence="1">Homodimer.</text>
</comment>
<comment type="subcellular location">
    <subcellularLocation>
        <location evidence="1">Cytoplasm</location>
    </subcellularLocation>
</comment>
<comment type="similarity">
    <text evidence="1">Belongs to the GrpE family.</text>
</comment>
<sequence length="191" mass="21935">MSEKKNKKERLADEIEQEELNILDESEETVEEEATADALTEEQAKILELENKLDEVENRYLRMQADFENVKKRHIADRDASQKYRSQSLAEDLLPALDSFEKALATTSDQEEVKQILKGMEMVYNQILVAFEKEGIEVIPAVGEQFDPNFHQAVMQDSDENAASNEITAELQKGYKLKDRVIRPSMVKVNQ</sequence>
<organism>
    <name type="scientific">Listeria welshimeri serovar 6b (strain ATCC 35897 / DSM 20650 / CCUG 15529 / CIP 8149 / NCTC 11857 / SLCC 5334 / V8)</name>
    <dbReference type="NCBI Taxonomy" id="386043"/>
    <lineage>
        <taxon>Bacteria</taxon>
        <taxon>Bacillati</taxon>
        <taxon>Bacillota</taxon>
        <taxon>Bacilli</taxon>
        <taxon>Bacillales</taxon>
        <taxon>Listeriaceae</taxon>
        <taxon>Listeria</taxon>
    </lineage>
</organism>
<evidence type="ECO:0000255" key="1">
    <source>
        <dbReference type="HAMAP-Rule" id="MF_01151"/>
    </source>
</evidence>
<keyword id="KW-0143">Chaperone</keyword>
<keyword id="KW-0963">Cytoplasm</keyword>
<keyword id="KW-0346">Stress response</keyword>
<dbReference type="EMBL" id="AM263198">
    <property type="protein sequence ID" value="CAK20907.1"/>
    <property type="molecule type" value="Genomic_DNA"/>
</dbReference>
<dbReference type="RefSeq" id="WP_011702280.1">
    <property type="nucleotide sequence ID" value="NC_008555.1"/>
</dbReference>
<dbReference type="SMR" id="A0AIS5"/>
<dbReference type="STRING" id="386043.lwe1489"/>
<dbReference type="GeneID" id="61189365"/>
<dbReference type="KEGG" id="lwe:lwe1489"/>
<dbReference type="eggNOG" id="COG0576">
    <property type="taxonomic scope" value="Bacteria"/>
</dbReference>
<dbReference type="HOGENOM" id="CLU_057217_5_2_9"/>
<dbReference type="OrthoDB" id="9812586at2"/>
<dbReference type="Proteomes" id="UP000000779">
    <property type="component" value="Chromosome"/>
</dbReference>
<dbReference type="GO" id="GO:0005737">
    <property type="term" value="C:cytoplasm"/>
    <property type="evidence" value="ECO:0007669"/>
    <property type="project" value="UniProtKB-SubCell"/>
</dbReference>
<dbReference type="GO" id="GO:0000774">
    <property type="term" value="F:adenyl-nucleotide exchange factor activity"/>
    <property type="evidence" value="ECO:0007669"/>
    <property type="project" value="InterPro"/>
</dbReference>
<dbReference type="GO" id="GO:0042803">
    <property type="term" value="F:protein homodimerization activity"/>
    <property type="evidence" value="ECO:0007669"/>
    <property type="project" value="InterPro"/>
</dbReference>
<dbReference type="GO" id="GO:0051087">
    <property type="term" value="F:protein-folding chaperone binding"/>
    <property type="evidence" value="ECO:0007669"/>
    <property type="project" value="InterPro"/>
</dbReference>
<dbReference type="GO" id="GO:0051082">
    <property type="term" value="F:unfolded protein binding"/>
    <property type="evidence" value="ECO:0007669"/>
    <property type="project" value="TreeGrafter"/>
</dbReference>
<dbReference type="GO" id="GO:0006457">
    <property type="term" value="P:protein folding"/>
    <property type="evidence" value="ECO:0007669"/>
    <property type="project" value="InterPro"/>
</dbReference>
<dbReference type="CDD" id="cd00446">
    <property type="entry name" value="GrpE"/>
    <property type="match status" value="1"/>
</dbReference>
<dbReference type="FunFam" id="2.30.22.10:FF:000001">
    <property type="entry name" value="Protein GrpE"/>
    <property type="match status" value="1"/>
</dbReference>
<dbReference type="FunFam" id="3.90.20.20:FF:000002">
    <property type="entry name" value="Protein GrpE"/>
    <property type="match status" value="1"/>
</dbReference>
<dbReference type="Gene3D" id="3.90.20.20">
    <property type="match status" value="1"/>
</dbReference>
<dbReference type="Gene3D" id="2.30.22.10">
    <property type="entry name" value="Head domain of nucleotide exchange factor GrpE"/>
    <property type="match status" value="1"/>
</dbReference>
<dbReference type="HAMAP" id="MF_01151">
    <property type="entry name" value="GrpE"/>
    <property type="match status" value="1"/>
</dbReference>
<dbReference type="InterPro" id="IPR000740">
    <property type="entry name" value="GrpE"/>
</dbReference>
<dbReference type="InterPro" id="IPR013805">
    <property type="entry name" value="GrpE_coiled_coil"/>
</dbReference>
<dbReference type="InterPro" id="IPR009012">
    <property type="entry name" value="GrpE_head"/>
</dbReference>
<dbReference type="NCBIfam" id="NF010738">
    <property type="entry name" value="PRK14140.1"/>
    <property type="match status" value="1"/>
</dbReference>
<dbReference type="PANTHER" id="PTHR21237">
    <property type="entry name" value="GRPE PROTEIN"/>
    <property type="match status" value="1"/>
</dbReference>
<dbReference type="PANTHER" id="PTHR21237:SF23">
    <property type="entry name" value="GRPE PROTEIN HOMOLOG, MITOCHONDRIAL"/>
    <property type="match status" value="1"/>
</dbReference>
<dbReference type="Pfam" id="PF01025">
    <property type="entry name" value="GrpE"/>
    <property type="match status" value="1"/>
</dbReference>
<dbReference type="PRINTS" id="PR00773">
    <property type="entry name" value="GRPEPROTEIN"/>
</dbReference>
<dbReference type="SUPFAM" id="SSF58014">
    <property type="entry name" value="Coiled-coil domain of nucleotide exchange factor GrpE"/>
    <property type="match status" value="1"/>
</dbReference>
<dbReference type="SUPFAM" id="SSF51064">
    <property type="entry name" value="Head domain of nucleotide exchange factor GrpE"/>
    <property type="match status" value="1"/>
</dbReference>
<dbReference type="PROSITE" id="PS01071">
    <property type="entry name" value="GRPE"/>
    <property type="match status" value="1"/>
</dbReference>
<proteinExistence type="inferred from homology"/>
<protein>
    <recommendedName>
        <fullName evidence="1">Protein GrpE</fullName>
    </recommendedName>
    <alternativeName>
        <fullName evidence="1">HSP-70 cofactor</fullName>
    </alternativeName>
</protein>